<proteinExistence type="evidence at protein level"/>
<comment type="miscellaneous">
    <text>On the 2D-gel the determined MW of this unknown protein is: 70 kDa.</text>
</comment>
<protein>
    <recommendedName>
        <fullName>Unknown 70 kDa protein</fullName>
    </recommendedName>
</protein>
<accession>P83439</accession>
<evidence type="ECO:0000305" key="1"/>
<sequence>TQAGSQNPNDLSPGP</sequence>
<reference key="1">
    <citation type="journal article" date="2002" name="Can. J. Microbiol.">
        <title>Protein analysis in a pleomorphically deteriorated strain of the insect-pathogenic fungus Metarhizium anisopliae.</title>
        <authorList>
            <person name="Kamp A.M."/>
            <person name="Bidochka M.J."/>
        </authorList>
    </citation>
    <scope>PROTEIN SEQUENCE</scope>
    <source>
        <strain>54A-1b</strain>
    </source>
</reference>
<name>UP02_METAN</name>
<keyword id="KW-0903">Direct protein sequencing</keyword>
<feature type="chain" id="PRO_0000055562" description="Unknown 70 kDa protein">
    <location>
        <begin position="1"/>
        <end position="15" status="greater than"/>
    </location>
</feature>
<feature type="non-terminal residue" evidence="1">
    <location>
        <position position="15"/>
    </location>
</feature>
<organism evidence="1">
    <name type="scientific">Metarhizium anisopliae</name>
    <name type="common">Entomophthora anisopliae</name>
    <dbReference type="NCBI Taxonomy" id="5530"/>
    <lineage>
        <taxon>Eukaryota</taxon>
        <taxon>Fungi</taxon>
        <taxon>Dikarya</taxon>
        <taxon>Ascomycota</taxon>
        <taxon>Pezizomycotina</taxon>
        <taxon>Sordariomycetes</taxon>
        <taxon>Hypocreomycetidae</taxon>
        <taxon>Hypocreales</taxon>
        <taxon>Clavicipitaceae</taxon>
        <taxon>Metarhizium</taxon>
    </lineage>
</organism>